<proteinExistence type="inferred from homology"/>
<reference key="1">
    <citation type="journal article" date="2006" name="Genome Res.">
        <title>Skewed genomic variability in strains of the toxigenic bacterial pathogen, Clostridium perfringens.</title>
        <authorList>
            <person name="Myers G.S.A."/>
            <person name="Rasko D.A."/>
            <person name="Cheung J.K."/>
            <person name="Ravel J."/>
            <person name="Seshadri R."/>
            <person name="DeBoy R.T."/>
            <person name="Ren Q."/>
            <person name="Varga J."/>
            <person name="Awad M.M."/>
            <person name="Brinkac L.M."/>
            <person name="Daugherty S.C."/>
            <person name="Haft D.H."/>
            <person name="Dodson R.J."/>
            <person name="Madupu R."/>
            <person name="Nelson W.C."/>
            <person name="Rosovitz M.J."/>
            <person name="Sullivan S.A."/>
            <person name="Khouri H."/>
            <person name="Dimitrov G.I."/>
            <person name="Watkins K.L."/>
            <person name="Mulligan S."/>
            <person name="Benton J."/>
            <person name="Radune D."/>
            <person name="Fisher D.J."/>
            <person name="Atkins H.S."/>
            <person name="Hiscox T."/>
            <person name="Jost B.H."/>
            <person name="Billington S.J."/>
            <person name="Songer J.G."/>
            <person name="McClane B.A."/>
            <person name="Titball R.W."/>
            <person name="Rood J.I."/>
            <person name="Melville S.B."/>
            <person name="Paulsen I.T."/>
        </authorList>
    </citation>
    <scope>NUCLEOTIDE SEQUENCE [LARGE SCALE GENOMIC DNA]</scope>
    <source>
        <strain>ATCC 13124 / DSM 756 / JCM 1290 / NCIMB 6125 / NCTC 8237 / S 107 / Type A</strain>
    </source>
</reference>
<gene>
    <name evidence="1" type="primary">cbiD</name>
    <name type="ordered locus">CPF_1434</name>
</gene>
<name>CBID_CLOP1</name>
<comment type="function">
    <text evidence="1">Catalyzes the methylation of C-1 in cobalt-precorrin-5B to form cobalt-precorrin-6A.</text>
</comment>
<comment type="catalytic activity">
    <reaction evidence="1">
        <text>Co-precorrin-5B + S-adenosyl-L-methionine = Co-precorrin-6A + S-adenosyl-L-homocysteine</text>
        <dbReference type="Rhea" id="RHEA:26285"/>
        <dbReference type="ChEBI" id="CHEBI:57856"/>
        <dbReference type="ChEBI" id="CHEBI:59789"/>
        <dbReference type="ChEBI" id="CHEBI:60063"/>
        <dbReference type="ChEBI" id="CHEBI:60064"/>
        <dbReference type="EC" id="2.1.1.195"/>
    </reaction>
</comment>
<comment type="pathway">
    <text evidence="1">Cofactor biosynthesis; adenosylcobalamin biosynthesis; cob(II)yrinate a,c-diamide from sirohydrochlorin (anaerobic route): step 6/10.</text>
</comment>
<comment type="similarity">
    <text evidence="1">Belongs to the CbiD family.</text>
</comment>
<dbReference type="EC" id="2.1.1.195" evidence="1"/>
<dbReference type="EMBL" id="CP000246">
    <property type="protein sequence ID" value="ABG83583.1"/>
    <property type="molecule type" value="Genomic_DNA"/>
</dbReference>
<dbReference type="RefSeq" id="WP_003456440.1">
    <property type="nucleotide sequence ID" value="NC_008261.1"/>
</dbReference>
<dbReference type="SMR" id="Q0TR61"/>
<dbReference type="STRING" id="195103.CPF_1434"/>
<dbReference type="PaxDb" id="195103-CPF_1434"/>
<dbReference type="GeneID" id="93002250"/>
<dbReference type="KEGG" id="cpf:CPF_1434"/>
<dbReference type="eggNOG" id="COG1903">
    <property type="taxonomic scope" value="Bacteria"/>
</dbReference>
<dbReference type="HOGENOM" id="CLU_041273_1_0_9"/>
<dbReference type="UniPathway" id="UPA00148">
    <property type="reaction ID" value="UER00227"/>
</dbReference>
<dbReference type="Proteomes" id="UP000001823">
    <property type="component" value="Chromosome"/>
</dbReference>
<dbReference type="GO" id="GO:0043780">
    <property type="term" value="F:cobalt-precorrin-5B C1-methyltransferase activity"/>
    <property type="evidence" value="ECO:0007669"/>
    <property type="project" value="RHEA"/>
</dbReference>
<dbReference type="GO" id="GO:0019251">
    <property type="term" value="P:anaerobic cobalamin biosynthetic process"/>
    <property type="evidence" value="ECO:0007669"/>
    <property type="project" value="UniProtKB-UniRule"/>
</dbReference>
<dbReference type="GO" id="GO:0032259">
    <property type="term" value="P:methylation"/>
    <property type="evidence" value="ECO:0007669"/>
    <property type="project" value="UniProtKB-KW"/>
</dbReference>
<dbReference type="Gene3D" id="3.30.2110.10">
    <property type="entry name" value="CbiD-like"/>
    <property type="match status" value="1"/>
</dbReference>
<dbReference type="HAMAP" id="MF_00787">
    <property type="entry name" value="CbiD"/>
    <property type="match status" value="1"/>
</dbReference>
<dbReference type="InterPro" id="IPR002748">
    <property type="entry name" value="CbiD"/>
</dbReference>
<dbReference type="InterPro" id="IPR036074">
    <property type="entry name" value="CbiD_sf"/>
</dbReference>
<dbReference type="NCBIfam" id="TIGR00312">
    <property type="entry name" value="cbiD"/>
    <property type="match status" value="1"/>
</dbReference>
<dbReference type="PANTHER" id="PTHR35863">
    <property type="entry name" value="COBALT-PRECORRIN-5B C(1)-METHYLTRANSFERASE"/>
    <property type="match status" value="1"/>
</dbReference>
<dbReference type="PANTHER" id="PTHR35863:SF1">
    <property type="entry name" value="COBALT-PRECORRIN-5B C(1)-METHYLTRANSFERASE"/>
    <property type="match status" value="1"/>
</dbReference>
<dbReference type="Pfam" id="PF01888">
    <property type="entry name" value="CbiD"/>
    <property type="match status" value="1"/>
</dbReference>
<dbReference type="PIRSF" id="PIRSF026782">
    <property type="entry name" value="CbiD"/>
    <property type="match status" value="1"/>
</dbReference>
<dbReference type="SUPFAM" id="SSF111342">
    <property type="entry name" value="CbiD-like"/>
    <property type="match status" value="1"/>
</dbReference>
<protein>
    <recommendedName>
        <fullName evidence="1">Cobalt-precorrin-5B C(1)-methyltransferase</fullName>
        <ecNumber evidence="1">2.1.1.195</ecNumber>
    </recommendedName>
    <alternativeName>
        <fullName evidence="1">Cobalt-precorrin-6A synthase</fullName>
    </alternativeName>
</protein>
<accession>Q0TR61</accession>
<feature type="chain" id="PRO_0000257757" description="Cobalt-precorrin-5B C(1)-methyltransferase">
    <location>
        <begin position="1"/>
        <end position="365"/>
    </location>
</feature>
<keyword id="KW-0169">Cobalamin biosynthesis</keyword>
<keyword id="KW-0489">Methyltransferase</keyword>
<keyword id="KW-0949">S-adenosyl-L-methionine</keyword>
<keyword id="KW-0808">Transferase</keyword>
<organism>
    <name type="scientific">Clostridium perfringens (strain ATCC 13124 / DSM 756 / JCM 1290 / NCIMB 6125 / NCTC 8237 / Type A)</name>
    <dbReference type="NCBI Taxonomy" id="195103"/>
    <lineage>
        <taxon>Bacteria</taxon>
        <taxon>Bacillati</taxon>
        <taxon>Bacillota</taxon>
        <taxon>Clostridia</taxon>
        <taxon>Eubacteriales</taxon>
        <taxon>Clostridiaceae</taxon>
        <taxon>Clostridium</taxon>
    </lineage>
</organism>
<evidence type="ECO:0000255" key="1">
    <source>
        <dbReference type="HAMAP-Rule" id="MF_00787"/>
    </source>
</evidence>
<sequence>MFDMYIESGGKKLRCGYTTGSCAAAAAKAATYMLFNKKDISVIEIDTPKNIKLNLEIQDIQVEKNSISCSIVKDGGDDIDATSGLEIFAKAEEIEEGFELCGGEGVGVVTKEGLFVEKGQPAINPVPREMIKKEVLSVLPKDKGVRITIFVPRGREIAKKTFNPRLGIVDGISILGTTGIVYPMSEEALKESIRIEIRQKAVNNKDLVFVFGNMGERFLRERGYKKDNIVVISNYVGFSIECALAQGIKDLTIVGHIGKLSKIAFGCFNTHSRVSDVRLEVIALELTLMGYDLELVKKVLDQKTSEGAVRLLGEDFPMLYERIGEKVLKRLDIYAYGEANFNILMYYGSKEMKLLYESKNSNLFD</sequence>